<dbReference type="EC" id="4.2.3.4" evidence="1"/>
<dbReference type="EC" id="2.5.1.19" evidence="1"/>
<dbReference type="EC" id="2.7.1.71" evidence="1"/>
<dbReference type="EC" id="4.2.1.10" evidence="1"/>
<dbReference type="EC" id="1.1.1.25" evidence="1"/>
<dbReference type="EMBL" id="CH408080">
    <property type="protein sequence ID" value="EEQ40685.1"/>
    <property type="molecule type" value="Genomic_DNA"/>
</dbReference>
<dbReference type="RefSeq" id="XP_002615931.1">
    <property type="nucleotide sequence ID" value="XM_002615885.1"/>
</dbReference>
<dbReference type="SMR" id="C4Y9D5"/>
<dbReference type="FunCoup" id="C4Y9D5">
    <property type="interactions" value="468"/>
</dbReference>
<dbReference type="STRING" id="306902.C4Y9D5"/>
<dbReference type="GeneID" id="8496038"/>
<dbReference type="KEGG" id="clu:CLUG_04813"/>
<dbReference type="VEuPathDB" id="FungiDB:CLUG_04813"/>
<dbReference type="HOGENOM" id="CLU_001201_1_2_1"/>
<dbReference type="InParanoid" id="C4Y9D5"/>
<dbReference type="OMA" id="SWANMSW"/>
<dbReference type="OrthoDB" id="107196at4891"/>
<dbReference type="UniPathway" id="UPA00053">
    <property type="reaction ID" value="UER00085"/>
</dbReference>
<dbReference type="UniPathway" id="UPA00053">
    <property type="reaction ID" value="UER00086"/>
</dbReference>
<dbReference type="UniPathway" id="UPA00053">
    <property type="reaction ID" value="UER00087"/>
</dbReference>
<dbReference type="UniPathway" id="UPA00053">
    <property type="reaction ID" value="UER00088"/>
</dbReference>
<dbReference type="UniPathway" id="UPA00053">
    <property type="reaction ID" value="UER00089"/>
</dbReference>
<dbReference type="Proteomes" id="UP000007703">
    <property type="component" value="Unassembled WGS sequence"/>
</dbReference>
<dbReference type="GO" id="GO:0005737">
    <property type="term" value="C:cytoplasm"/>
    <property type="evidence" value="ECO:0007669"/>
    <property type="project" value="UniProtKB-SubCell"/>
</dbReference>
<dbReference type="GO" id="GO:0003855">
    <property type="term" value="F:3-dehydroquinate dehydratase activity"/>
    <property type="evidence" value="ECO:0007669"/>
    <property type="project" value="UniProtKB-UniRule"/>
</dbReference>
<dbReference type="GO" id="GO:0003856">
    <property type="term" value="F:3-dehydroquinate synthase activity"/>
    <property type="evidence" value="ECO:0007669"/>
    <property type="project" value="UniProtKB-UniRule"/>
</dbReference>
<dbReference type="GO" id="GO:0003866">
    <property type="term" value="F:3-phosphoshikimate 1-carboxyvinyltransferase activity"/>
    <property type="evidence" value="ECO:0007669"/>
    <property type="project" value="UniProtKB-UniRule"/>
</dbReference>
<dbReference type="GO" id="GO:0005524">
    <property type="term" value="F:ATP binding"/>
    <property type="evidence" value="ECO:0007669"/>
    <property type="project" value="UniProtKB-UniRule"/>
</dbReference>
<dbReference type="GO" id="GO:0046872">
    <property type="term" value="F:metal ion binding"/>
    <property type="evidence" value="ECO:0007669"/>
    <property type="project" value="UniProtKB-UniRule"/>
</dbReference>
<dbReference type="GO" id="GO:0004764">
    <property type="term" value="F:shikimate 3-dehydrogenase (NADP+) activity"/>
    <property type="evidence" value="ECO:0007669"/>
    <property type="project" value="UniProtKB-UniRule"/>
</dbReference>
<dbReference type="GO" id="GO:0004765">
    <property type="term" value="F:shikimate kinase activity"/>
    <property type="evidence" value="ECO:0007669"/>
    <property type="project" value="UniProtKB-UniRule"/>
</dbReference>
<dbReference type="GO" id="GO:0008652">
    <property type="term" value="P:amino acid biosynthetic process"/>
    <property type="evidence" value="ECO:0007669"/>
    <property type="project" value="UniProtKB-KW"/>
</dbReference>
<dbReference type="GO" id="GO:0009073">
    <property type="term" value="P:aromatic amino acid family biosynthetic process"/>
    <property type="evidence" value="ECO:0007669"/>
    <property type="project" value="UniProtKB-UniRule"/>
</dbReference>
<dbReference type="GO" id="GO:0009423">
    <property type="term" value="P:chorismate biosynthetic process"/>
    <property type="evidence" value="ECO:0007669"/>
    <property type="project" value="UniProtKB-UniRule"/>
</dbReference>
<dbReference type="CDD" id="cd00502">
    <property type="entry name" value="DHQase_I"/>
    <property type="match status" value="1"/>
</dbReference>
<dbReference type="CDD" id="cd08195">
    <property type="entry name" value="DHQS"/>
    <property type="match status" value="1"/>
</dbReference>
<dbReference type="CDD" id="cd01556">
    <property type="entry name" value="EPSP_synthase"/>
    <property type="match status" value="1"/>
</dbReference>
<dbReference type="CDD" id="cd01065">
    <property type="entry name" value="NAD_bind_Shikimate_DH"/>
    <property type="match status" value="1"/>
</dbReference>
<dbReference type="CDD" id="cd00464">
    <property type="entry name" value="SK"/>
    <property type="match status" value="1"/>
</dbReference>
<dbReference type="FunFam" id="1.20.1090.10:FF:000007">
    <property type="entry name" value="Pentafunctional AROM polypeptide"/>
    <property type="match status" value="1"/>
</dbReference>
<dbReference type="FunFam" id="3.20.20.70:FF:000135">
    <property type="entry name" value="Pentafunctional AROM polypeptide"/>
    <property type="match status" value="1"/>
</dbReference>
<dbReference type="FunFam" id="3.40.50.1970:FF:000007">
    <property type="entry name" value="Pentafunctional AROM polypeptide"/>
    <property type="match status" value="1"/>
</dbReference>
<dbReference type="FunFam" id="3.40.50.300:FF:001256">
    <property type="entry name" value="Pentafunctional AROM polypeptide"/>
    <property type="match status" value="1"/>
</dbReference>
<dbReference type="FunFam" id="3.65.10.10:FF:000007">
    <property type="entry name" value="Pentafunctional AROM polypeptide"/>
    <property type="match status" value="1"/>
</dbReference>
<dbReference type="FunFam" id="3.65.10.10:FF:000008">
    <property type="entry name" value="Pentafunctional AROM polypeptide"/>
    <property type="match status" value="1"/>
</dbReference>
<dbReference type="Gene3D" id="3.40.50.1970">
    <property type="match status" value="1"/>
</dbReference>
<dbReference type="Gene3D" id="3.20.20.70">
    <property type="entry name" value="Aldolase class I"/>
    <property type="match status" value="1"/>
</dbReference>
<dbReference type="Gene3D" id="1.20.1090.10">
    <property type="entry name" value="Dehydroquinate synthase-like - alpha domain"/>
    <property type="match status" value="1"/>
</dbReference>
<dbReference type="Gene3D" id="3.65.10.10">
    <property type="entry name" value="Enolpyruvate transferase domain"/>
    <property type="match status" value="2"/>
</dbReference>
<dbReference type="Gene3D" id="3.40.50.10860">
    <property type="entry name" value="Leucine Dehydrogenase, chain A, domain 1"/>
    <property type="match status" value="1"/>
</dbReference>
<dbReference type="Gene3D" id="3.40.50.720">
    <property type="entry name" value="NAD(P)-binding Rossmann-like Domain"/>
    <property type="match status" value="1"/>
</dbReference>
<dbReference type="Gene3D" id="3.40.50.300">
    <property type="entry name" value="P-loop containing nucleotide triphosphate hydrolases"/>
    <property type="match status" value="1"/>
</dbReference>
<dbReference type="HAMAP" id="MF_00210">
    <property type="entry name" value="EPSP_synth"/>
    <property type="match status" value="1"/>
</dbReference>
<dbReference type="HAMAP" id="MF_03143">
    <property type="entry name" value="Pentafunct_AroM"/>
    <property type="match status" value="1"/>
</dbReference>
<dbReference type="HAMAP" id="MF_00109">
    <property type="entry name" value="Shikimate_kinase"/>
    <property type="match status" value="1"/>
</dbReference>
<dbReference type="InterPro" id="IPR013785">
    <property type="entry name" value="Aldolase_TIM"/>
</dbReference>
<dbReference type="InterPro" id="IPR046346">
    <property type="entry name" value="Aminoacid_DH-like_N_sf"/>
</dbReference>
<dbReference type="InterPro" id="IPR016037">
    <property type="entry name" value="DHQ_synth_AroB"/>
</dbReference>
<dbReference type="InterPro" id="IPR030960">
    <property type="entry name" value="DHQS/DOIS_N"/>
</dbReference>
<dbReference type="InterPro" id="IPR056179">
    <property type="entry name" value="DHQS_C"/>
</dbReference>
<dbReference type="InterPro" id="IPR001381">
    <property type="entry name" value="DHquinase_I"/>
</dbReference>
<dbReference type="InterPro" id="IPR001986">
    <property type="entry name" value="Enolpyruvate_Tfrase_dom"/>
</dbReference>
<dbReference type="InterPro" id="IPR036968">
    <property type="entry name" value="Enolpyruvate_Tfrase_sf"/>
</dbReference>
<dbReference type="InterPro" id="IPR006264">
    <property type="entry name" value="EPSP_synthase"/>
</dbReference>
<dbReference type="InterPro" id="IPR023193">
    <property type="entry name" value="EPSP_synthase_CS"/>
</dbReference>
<dbReference type="InterPro" id="IPR036291">
    <property type="entry name" value="NAD(P)-bd_dom_sf"/>
</dbReference>
<dbReference type="InterPro" id="IPR027417">
    <property type="entry name" value="P-loop_NTPase"/>
</dbReference>
<dbReference type="InterPro" id="IPR008289">
    <property type="entry name" value="Pentafunct_AroM"/>
</dbReference>
<dbReference type="InterPro" id="IPR013792">
    <property type="entry name" value="RNA3'P_cycl/enolpyr_Trfase_a/b"/>
</dbReference>
<dbReference type="InterPro" id="IPR031322">
    <property type="entry name" value="Shikimate/glucono_kinase"/>
</dbReference>
<dbReference type="InterPro" id="IPR013708">
    <property type="entry name" value="Shikimate_DH-bd_N"/>
</dbReference>
<dbReference type="InterPro" id="IPR010110">
    <property type="entry name" value="Shikimate_DH_AroM-type"/>
</dbReference>
<dbReference type="InterPro" id="IPR000623">
    <property type="entry name" value="Shikimate_kinase/TSH1"/>
</dbReference>
<dbReference type="InterPro" id="IPR023000">
    <property type="entry name" value="Shikimate_kinase_CS"/>
</dbReference>
<dbReference type="InterPro" id="IPR006151">
    <property type="entry name" value="Shikm_DH/Glu-tRNA_Rdtase"/>
</dbReference>
<dbReference type="NCBIfam" id="TIGR01356">
    <property type="entry name" value="aroA"/>
    <property type="match status" value="1"/>
</dbReference>
<dbReference type="NCBIfam" id="TIGR01357">
    <property type="entry name" value="aroB"/>
    <property type="match status" value="1"/>
</dbReference>
<dbReference type="NCBIfam" id="TIGR01093">
    <property type="entry name" value="aroD"/>
    <property type="match status" value="1"/>
</dbReference>
<dbReference type="NCBIfam" id="TIGR01809">
    <property type="entry name" value="Shik-DH-AROM"/>
    <property type="match status" value="1"/>
</dbReference>
<dbReference type="PANTHER" id="PTHR21090">
    <property type="entry name" value="AROM/DEHYDROQUINATE SYNTHASE"/>
    <property type="match status" value="1"/>
</dbReference>
<dbReference type="PANTHER" id="PTHR21090:SF5">
    <property type="entry name" value="PENTAFUNCTIONAL AROM POLYPEPTIDE"/>
    <property type="match status" value="1"/>
</dbReference>
<dbReference type="Pfam" id="PF01761">
    <property type="entry name" value="DHQ_synthase"/>
    <property type="match status" value="1"/>
</dbReference>
<dbReference type="Pfam" id="PF24621">
    <property type="entry name" value="DHQS_C"/>
    <property type="match status" value="1"/>
</dbReference>
<dbReference type="Pfam" id="PF01487">
    <property type="entry name" value="DHquinase_I"/>
    <property type="match status" value="1"/>
</dbReference>
<dbReference type="Pfam" id="PF00275">
    <property type="entry name" value="EPSP_synthase"/>
    <property type="match status" value="1"/>
</dbReference>
<dbReference type="Pfam" id="PF01488">
    <property type="entry name" value="Shikimate_DH"/>
    <property type="match status" value="1"/>
</dbReference>
<dbReference type="Pfam" id="PF08501">
    <property type="entry name" value="Shikimate_dh_N"/>
    <property type="match status" value="1"/>
</dbReference>
<dbReference type="Pfam" id="PF01202">
    <property type="entry name" value="SKI"/>
    <property type="match status" value="1"/>
</dbReference>
<dbReference type="PIRSF" id="PIRSF000514">
    <property type="entry name" value="Pentafunct_AroM"/>
    <property type="match status" value="1"/>
</dbReference>
<dbReference type="PRINTS" id="PR01100">
    <property type="entry name" value="SHIKIMTKNASE"/>
</dbReference>
<dbReference type="SUPFAM" id="SSF51569">
    <property type="entry name" value="Aldolase"/>
    <property type="match status" value="1"/>
</dbReference>
<dbReference type="SUPFAM" id="SSF53223">
    <property type="entry name" value="Aminoacid dehydrogenase-like, N-terminal domain"/>
    <property type="match status" value="1"/>
</dbReference>
<dbReference type="SUPFAM" id="SSF56796">
    <property type="entry name" value="Dehydroquinate synthase-like"/>
    <property type="match status" value="1"/>
</dbReference>
<dbReference type="SUPFAM" id="SSF55205">
    <property type="entry name" value="EPT/RTPC-like"/>
    <property type="match status" value="1"/>
</dbReference>
<dbReference type="SUPFAM" id="SSF51735">
    <property type="entry name" value="NAD(P)-binding Rossmann-fold domains"/>
    <property type="match status" value="1"/>
</dbReference>
<dbReference type="SUPFAM" id="SSF52540">
    <property type="entry name" value="P-loop containing nucleoside triphosphate hydrolases"/>
    <property type="match status" value="1"/>
</dbReference>
<dbReference type="PROSITE" id="PS00104">
    <property type="entry name" value="EPSP_SYNTHASE_1"/>
    <property type="match status" value="1"/>
</dbReference>
<dbReference type="PROSITE" id="PS00885">
    <property type="entry name" value="EPSP_SYNTHASE_2"/>
    <property type="match status" value="1"/>
</dbReference>
<dbReference type="PROSITE" id="PS01128">
    <property type="entry name" value="SHIKIMATE_KINASE"/>
    <property type="match status" value="1"/>
</dbReference>
<name>ARO1_CLAL4</name>
<organism>
    <name type="scientific">Clavispora lusitaniae (strain ATCC 42720)</name>
    <name type="common">Yeast</name>
    <name type="synonym">Candida lusitaniae</name>
    <dbReference type="NCBI Taxonomy" id="306902"/>
    <lineage>
        <taxon>Eukaryota</taxon>
        <taxon>Fungi</taxon>
        <taxon>Dikarya</taxon>
        <taxon>Ascomycota</taxon>
        <taxon>Saccharomycotina</taxon>
        <taxon>Pichiomycetes</taxon>
        <taxon>Metschnikowiaceae</taxon>
        <taxon>Clavispora</taxon>
    </lineage>
</organism>
<evidence type="ECO:0000255" key="1">
    <source>
        <dbReference type="HAMAP-Rule" id="MF_03143"/>
    </source>
</evidence>
<reference key="1">
    <citation type="journal article" date="2009" name="Nature">
        <title>Evolution of pathogenicity and sexual reproduction in eight Candida genomes.</title>
        <authorList>
            <person name="Butler G."/>
            <person name="Rasmussen M.D."/>
            <person name="Lin M.F."/>
            <person name="Santos M.A.S."/>
            <person name="Sakthikumar S."/>
            <person name="Munro C.A."/>
            <person name="Rheinbay E."/>
            <person name="Grabherr M."/>
            <person name="Forche A."/>
            <person name="Reedy J.L."/>
            <person name="Agrafioti I."/>
            <person name="Arnaud M.B."/>
            <person name="Bates S."/>
            <person name="Brown A.J.P."/>
            <person name="Brunke S."/>
            <person name="Costanzo M.C."/>
            <person name="Fitzpatrick D.A."/>
            <person name="de Groot P.W.J."/>
            <person name="Harris D."/>
            <person name="Hoyer L.L."/>
            <person name="Hube B."/>
            <person name="Klis F.M."/>
            <person name="Kodira C."/>
            <person name="Lennard N."/>
            <person name="Logue M.E."/>
            <person name="Martin R."/>
            <person name="Neiman A.M."/>
            <person name="Nikolaou E."/>
            <person name="Quail M.A."/>
            <person name="Quinn J."/>
            <person name="Santos M.C."/>
            <person name="Schmitzberger F.F."/>
            <person name="Sherlock G."/>
            <person name="Shah P."/>
            <person name="Silverstein K.A.T."/>
            <person name="Skrzypek M.S."/>
            <person name="Soll D."/>
            <person name="Staggs R."/>
            <person name="Stansfield I."/>
            <person name="Stumpf M.P.H."/>
            <person name="Sudbery P.E."/>
            <person name="Srikantha T."/>
            <person name="Zeng Q."/>
            <person name="Berman J."/>
            <person name="Berriman M."/>
            <person name="Heitman J."/>
            <person name="Gow N.A.R."/>
            <person name="Lorenz M.C."/>
            <person name="Birren B.W."/>
            <person name="Kellis M."/>
            <person name="Cuomo C.A."/>
        </authorList>
    </citation>
    <scope>NUCLEOTIDE SEQUENCE [LARGE SCALE GENOMIC DNA]</scope>
    <source>
        <strain>ATCC 42720</strain>
    </source>
</reference>
<proteinExistence type="inferred from homology"/>
<comment type="function">
    <text evidence="1">The AROM polypeptide catalyzes 5 consecutive enzymatic reactions in prechorismate polyaromatic amino acid biosynthesis.</text>
</comment>
<comment type="catalytic activity">
    <reaction evidence="1">
        <text>7-phospho-2-dehydro-3-deoxy-D-arabino-heptonate = 3-dehydroquinate + phosphate</text>
        <dbReference type="Rhea" id="RHEA:21968"/>
        <dbReference type="ChEBI" id="CHEBI:32364"/>
        <dbReference type="ChEBI" id="CHEBI:43474"/>
        <dbReference type="ChEBI" id="CHEBI:58394"/>
        <dbReference type="EC" id="4.2.3.4"/>
    </reaction>
</comment>
<comment type="catalytic activity">
    <reaction evidence="1">
        <text>3-dehydroquinate = 3-dehydroshikimate + H2O</text>
        <dbReference type="Rhea" id="RHEA:21096"/>
        <dbReference type="ChEBI" id="CHEBI:15377"/>
        <dbReference type="ChEBI" id="CHEBI:16630"/>
        <dbReference type="ChEBI" id="CHEBI:32364"/>
        <dbReference type="EC" id="4.2.1.10"/>
    </reaction>
</comment>
<comment type="catalytic activity">
    <reaction evidence="1">
        <text>shikimate + NADP(+) = 3-dehydroshikimate + NADPH + H(+)</text>
        <dbReference type="Rhea" id="RHEA:17737"/>
        <dbReference type="ChEBI" id="CHEBI:15378"/>
        <dbReference type="ChEBI" id="CHEBI:16630"/>
        <dbReference type="ChEBI" id="CHEBI:36208"/>
        <dbReference type="ChEBI" id="CHEBI:57783"/>
        <dbReference type="ChEBI" id="CHEBI:58349"/>
        <dbReference type="EC" id="1.1.1.25"/>
    </reaction>
</comment>
<comment type="catalytic activity">
    <reaction evidence="1">
        <text>shikimate + ATP = 3-phosphoshikimate + ADP + H(+)</text>
        <dbReference type="Rhea" id="RHEA:13121"/>
        <dbReference type="ChEBI" id="CHEBI:15378"/>
        <dbReference type="ChEBI" id="CHEBI:30616"/>
        <dbReference type="ChEBI" id="CHEBI:36208"/>
        <dbReference type="ChEBI" id="CHEBI:145989"/>
        <dbReference type="ChEBI" id="CHEBI:456216"/>
        <dbReference type="EC" id="2.7.1.71"/>
    </reaction>
</comment>
<comment type="catalytic activity">
    <reaction evidence="1">
        <text>3-phosphoshikimate + phosphoenolpyruvate = 5-O-(1-carboxyvinyl)-3-phosphoshikimate + phosphate</text>
        <dbReference type="Rhea" id="RHEA:21256"/>
        <dbReference type="ChEBI" id="CHEBI:43474"/>
        <dbReference type="ChEBI" id="CHEBI:57701"/>
        <dbReference type="ChEBI" id="CHEBI:58702"/>
        <dbReference type="ChEBI" id="CHEBI:145989"/>
        <dbReference type="EC" id="2.5.1.19"/>
    </reaction>
</comment>
<comment type="cofactor">
    <cofactor>
        <name>Zn(2+)</name>
        <dbReference type="ChEBI" id="CHEBI:29105"/>
    </cofactor>
    <text>Binds 2 Zn(2+) ions per subunit.</text>
</comment>
<comment type="pathway">
    <text evidence="1">Metabolic intermediate biosynthesis; chorismate biosynthesis; chorismate from D-erythrose 4-phosphate and phosphoenolpyruvate: step 2/7.</text>
</comment>
<comment type="pathway">
    <text evidence="1">Metabolic intermediate biosynthesis; chorismate biosynthesis; chorismate from D-erythrose 4-phosphate and phosphoenolpyruvate: step 3/7.</text>
</comment>
<comment type="pathway">
    <text evidence="1">Metabolic intermediate biosynthesis; chorismate biosynthesis; chorismate from D-erythrose 4-phosphate and phosphoenolpyruvate: step 4/7.</text>
</comment>
<comment type="pathway">
    <text evidence="1">Metabolic intermediate biosynthesis; chorismate biosynthesis; chorismate from D-erythrose 4-phosphate and phosphoenolpyruvate: step 5/7.</text>
</comment>
<comment type="pathway">
    <text evidence="1">Metabolic intermediate biosynthesis; chorismate biosynthesis; chorismate from D-erythrose 4-phosphate and phosphoenolpyruvate: step 6/7.</text>
</comment>
<comment type="subunit">
    <text evidence="1">Homodimer.</text>
</comment>
<comment type="subcellular location">
    <subcellularLocation>
        <location evidence="1">Cytoplasm</location>
    </subcellularLocation>
</comment>
<comment type="similarity">
    <text evidence="1">In the N-terminal section; belongs to the sugar phosphate cyclases superfamily. Dehydroquinate synthase family.</text>
</comment>
<comment type="similarity">
    <text evidence="1">In the 2nd section; belongs to the EPSP synthase family.</text>
</comment>
<comment type="similarity">
    <text evidence="1">In the 3rd section; belongs to the shikimate kinase family.</text>
</comment>
<comment type="similarity">
    <text evidence="1">In the 4th section; belongs to the type-I 3-dehydroquinase family.</text>
</comment>
<comment type="similarity">
    <text evidence="1">In the C-terminal section; belongs to the shikimate dehydrogenase family.</text>
</comment>
<sequence>MSQVEKVSILGSDSIHVGYGIQDHIVEETLTNLKSSTYVIITDSNMEATAPYQTLSSKFEAGLKEFRPESRLFYYAVSPGENNKSRETKAQVEDFLLQKGCTRDTVIIAVGGGVVGDMIGFVAATFMRGVRVVQVPTTLLAMVDSSIGGKTAVDTPLGKNFVGAFHQPKYVFVDVSFLTTLPTRQFINGMAEVVKTAAIWNEEEFTRLENFAKTFIAVVTSDNIDLATIKDDLVKTVLESIRVKADVVSADEKESSLRNLLNFGHTIGHAIEAIVTPQALHGECVAVGMVKEAELARYWGVLSPVAVARLVNCIAAYNLPTSVGDKIFVQRIGHKRHFIQINTLLEKMAIDKKNDGSKIRTVILEAIGKCYQLKAHEVSKQDLSFVLTDETLVHPFQEETTPKENVVIPPGSKSISNRALILAALGKGTVRIKNLLHSDDTKHMLAAVAALKGAEISTEDNGDTIVVKGNGGNFITCDEQLYLGNAGTASRFLTTVASLVNVNEQSNDYTVLTGNARMQERPVGPLVNALRANGSEIEYLNNEGSLPLKIKAGKGLKGGRVELAATISSQYVSSILMCAPYAEKEVTLALVGGKPISQLYIDMTIAMMKDFGISVTRDPHEEHTYHIPKGVYSNPGVYEVESDASSATYPLAFAAMTGTSCTVPNIGSSSLQGDARFAVDVLKPMGCTVEQTSTSTTVRGPSKGSLKPLTHVDMEPMTDAFLTASVVAAIANSSVPTQITGIANQRVKECNRILAMVDELAKFGVRAEELPDGIEIYGIDYKNLKVPSLENRGVCTYDDHRVAMSFSLLAGMCPEPVLITERSCTGKTWPGWWDVLHTKFGVELEGYEEPKDLNDPALLVNKEVNGDKSIVVIGMRAAGKSTLSRWIADFMGFELIDLDTVFEQTHGDIREYIKANGWGRFRELEAGIMKEYLTKCSSRHVISTGGGIVESEESRDILKSYTKTGGIVLHLHRDLDETIVFLSSDTTRPAYVSEIKDVWARREKWYHECSNYHFYSSHCGTEEEFKKLRHSFVSYLKTITGAGLSPVPKGRSFVLSLACSDLNDIAENLEDIVAGCEAIELRVDLLKDYSPSFVADQTAVLRKFVNLPIIYTIRTKGQGGNFPDEDVQALEQLSYLGIKLGVDYLDVQLSNSEKFVKSIIEKKAFTKIIATHIDLAGLPWTRAEWDNKYNQGISLNADVIQLVGFAHAFQDNIDLEQFRANHTITPLIAFNAGEHGKLSRVLNRTLTPVTSELLSNVSGNGQLTVGEINRCFSEIGGLSRRNFYIVGNPISHSRSPQLHTAGYEKLNLPHRFSKFETDYAQKVYEEVMTKPGFGGLAVTIPLKLDIMKYVSELSESAKIIGAVNTVTPLDGQPGKFYGDNTDWYGITQSFVRHGVPSFGNSSVNGMVVGGGGTSRAAAFALHQMGCKKIYMVNRTTSKLHEIKSSLPSDFNIEVLETVDQVEAADPVSLVVSCVPADKPLDSELLNKVERILYHGKNQEKRSFVPTLLDAAYKPRVTPIMKIAEEKFGWAVVPGVEMLVNQGVLQFKVHTVFTPPYKNVYEAVVDDNV</sequence>
<protein>
    <recommendedName>
        <fullName evidence="1">Pentafunctional AROM polypeptide</fullName>
    </recommendedName>
    <domain>
        <recommendedName>
            <fullName evidence="1">3-dehydroquinate synthase</fullName>
            <shortName evidence="1">DHQS</shortName>
            <ecNumber evidence="1">4.2.3.4</ecNumber>
        </recommendedName>
    </domain>
    <domain>
        <recommendedName>
            <fullName evidence="1">3-phosphoshikimate 1-carboxyvinyltransferase</fullName>
            <ecNumber evidence="1">2.5.1.19</ecNumber>
        </recommendedName>
        <alternativeName>
            <fullName evidence="1">5-enolpyruvylshikimate-3-phosphate synthase</fullName>
            <shortName evidence="1">EPSP synthase</shortName>
            <shortName evidence="1">EPSPS</shortName>
        </alternativeName>
    </domain>
    <domain>
        <recommendedName>
            <fullName evidence="1">Shikimate kinase</fullName>
            <shortName evidence="1">SK</shortName>
            <ecNumber evidence="1">2.7.1.71</ecNumber>
        </recommendedName>
    </domain>
    <domain>
        <recommendedName>
            <fullName evidence="1">3-dehydroquinate dehydratase</fullName>
            <shortName evidence="1">3-dehydroquinase</shortName>
            <ecNumber evidence="1">4.2.1.10</ecNumber>
        </recommendedName>
    </domain>
    <domain>
        <recommendedName>
            <fullName evidence="1">Shikimate dehydrogenase</fullName>
            <ecNumber evidence="1">1.1.1.25</ecNumber>
        </recommendedName>
    </domain>
</protein>
<gene>
    <name evidence="1" type="primary">ARO1</name>
    <name type="ORF">CLUG_04813</name>
</gene>
<accession>C4Y9D5</accession>
<feature type="chain" id="PRO_0000406713" description="Pentafunctional AROM polypeptide">
    <location>
        <begin position="1"/>
        <end position="1568"/>
    </location>
</feature>
<feature type="region of interest" description="3-dehydroquinate synthase">
    <location>
        <begin position="1"/>
        <end position="380"/>
    </location>
</feature>
<feature type="region of interest" description="EPSP synthase">
    <location>
        <begin position="393"/>
        <end position="842"/>
    </location>
</feature>
<feature type="region of interest" description="Shikimate kinase">
    <location>
        <begin position="867"/>
        <end position="1056"/>
    </location>
</feature>
<feature type="region of interest" description="3-dehydroquinase">
    <location>
        <begin position="1057"/>
        <end position="1267"/>
    </location>
</feature>
<feature type="region of interest" description="Shikimate dehydrogenase">
    <location>
        <begin position="1280"/>
        <end position="1568"/>
    </location>
</feature>
<feature type="active site" description="Proton acceptor; for 3-dehydroquinate synthase activity" evidence="1">
    <location>
        <position position="254"/>
    </location>
</feature>
<feature type="active site" description="Proton acceptor; for 3-dehydroquinate synthase activity" evidence="1">
    <location>
        <position position="269"/>
    </location>
</feature>
<feature type="active site" description="For EPSP synthase activity" evidence="1">
    <location>
        <position position="824"/>
    </location>
</feature>
<feature type="binding site" evidence="1">
    <location>
        <begin position="43"/>
        <end position="45"/>
    </location>
    <ligand>
        <name>NAD(+)</name>
        <dbReference type="ChEBI" id="CHEBI:57540"/>
    </ligand>
</feature>
<feature type="binding site" evidence="1">
    <location>
        <begin position="81"/>
        <end position="84"/>
    </location>
    <ligand>
        <name>NAD(+)</name>
        <dbReference type="ChEBI" id="CHEBI:57540"/>
    </ligand>
</feature>
<feature type="binding site" evidence="1">
    <location>
        <begin position="112"/>
        <end position="114"/>
    </location>
    <ligand>
        <name>NAD(+)</name>
        <dbReference type="ChEBI" id="CHEBI:57540"/>
    </ligand>
</feature>
<feature type="binding site" evidence="1">
    <location>
        <position position="117"/>
    </location>
    <ligand>
        <name>NAD(+)</name>
        <dbReference type="ChEBI" id="CHEBI:57540"/>
    </ligand>
</feature>
<feature type="binding site" evidence="1">
    <location>
        <position position="128"/>
    </location>
    <ligand>
        <name>7-phospho-2-dehydro-3-deoxy-D-arabino-heptonate</name>
        <dbReference type="ChEBI" id="CHEBI:58394"/>
    </ligand>
</feature>
<feature type="binding site" evidence="1">
    <location>
        <begin position="137"/>
        <end position="138"/>
    </location>
    <ligand>
        <name>NAD(+)</name>
        <dbReference type="ChEBI" id="CHEBI:57540"/>
    </ligand>
</feature>
<feature type="binding site" evidence="1">
    <location>
        <position position="144"/>
    </location>
    <ligand>
        <name>7-phospho-2-dehydro-3-deoxy-D-arabino-heptonate</name>
        <dbReference type="ChEBI" id="CHEBI:58394"/>
    </ligand>
</feature>
<feature type="binding site" evidence="1">
    <location>
        <position position="150"/>
    </location>
    <ligand>
        <name>7-phospho-2-dehydro-3-deoxy-D-arabino-heptonate</name>
        <dbReference type="ChEBI" id="CHEBI:58394"/>
    </ligand>
</feature>
<feature type="binding site" evidence="1">
    <location>
        <position position="159"/>
    </location>
    <ligand>
        <name>NAD(+)</name>
        <dbReference type="ChEBI" id="CHEBI:57540"/>
    </ligand>
</feature>
<feature type="binding site" evidence="1">
    <location>
        <position position="160"/>
    </location>
    <ligand>
        <name>7-phospho-2-dehydro-3-deoxy-D-arabino-heptonate</name>
        <dbReference type="ChEBI" id="CHEBI:58394"/>
    </ligand>
</feature>
<feature type="binding site" evidence="1">
    <location>
        <begin position="177"/>
        <end position="180"/>
    </location>
    <ligand>
        <name>NAD(+)</name>
        <dbReference type="ChEBI" id="CHEBI:57540"/>
    </ligand>
</feature>
<feature type="binding site" evidence="1">
    <location>
        <position position="188"/>
    </location>
    <ligand>
        <name>NAD(+)</name>
        <dbReference type="ChEBI" id="CHEBI:57540"/>
    </ligand>
</feature>
<feature type="binding site" evidence="1">
    <location>
        <begin position="192"/>
        <end position="195"/>
    </location>
    <ligand>
        <name>7-phospho-2-dehydro-3-deoxy-D-arabino-heptonate</name>
        <dbReference type="ChEBI" id="CHEBI:58394"/>
    </ligand>
</feature>
<feature type="binding site" evidence="1">
    <location>
        <position position="192"/>
    </location>
    <ligand>
        <name>Zn(2+)</name>
        <dbReference type="ChEBI" id="CHEBI:29105"/>
        <note>catalytic</note>
    </ligand>
</feature>
<feature type="binding site" evidence="1">
    <location>
        <position position="244"/>
    </location>
    <ligand>
        <name>7-phospho-2-dehydro-3-deoxy-D-arabino-heptonate</name>
        <dbReference type="ChEBI" id="CHEBI:58394"/>
    </ligand>
</feature>
<feature type="binding site" evidence="1">
    <location>
        <begin position="258"/>
        <end position="262"/>
    </location>
    <ligand>
        <name>7-phospho-2-dehydro-3-deoxy-D-arabino-heptonate</name>
        <dbReference type="ChEBI" id="CHEBI:58394"/>
    </ligand>
</feature>
<feature type="binding site" evidence="1">
    <location>
        <position position="265"/>
    </location>
    <ligand>
        <name>7-phospho-2-dehydro-3-deoxy-D-arabino-heptonate</name>
        <dbReference type="ChEBI" id="CHEBI:58394"/>
    </ligand>
</feature>
<feature type="binding site" evidence="1">
    <location>
        <position position="265"/>
    </location>
    <ligand>
        <name>Zn(2+)</name>
        <dbReference type="ChEBI" id="CHEBI:29105"/>
        <note>catalytic</note>
    </ligand>
</feature>
<feature type="binding site" evidence="1">
    <location>
        <position position="281"/>
    </location>
    <ligand>
        <name>7-phospho-2-dehydro-3-deoxy-D-arabino-heptonate</name>
        <dbReference type="ChEBI" id="CHEBI:58394"/>
    </ligand>
</feature>
<feature type="binding site" evidence="1">
    <location>
        <position position="281"/>
    </location>
    <ligand>
        <name>Zn(2+)</name>
        <dbReference type="ChEBI" id="CHEBI:29105"/>
        <note>catalytic</note>
    </ligand>
</feature>
<feature type="binding site" evidence="1">
    <location>
        <position position="352"/>
    </location>
    <ligand>
        <name>7-phospho-2-dehydro-3-deoxy-D-arabino-heptonate</name>
        <dbReference type="ChEBI" id="CHEBI:58394"/>
    </ligand>
</feature>
<feature type="binding site" evidence="1">
    <location>
        <begin position="874"/>
        <end position="881"/>
    </location>
    <ligand>
        <name>ATP</name>
        <dbReference type="ChEBI" id="CHEBI:30616"/>
    </ligand>
</feature>
<keyword id="KW-0028">Amino-acid biosynthesis</keyword>
<keyword id="KW-0057">Aromatic amino acid biosynthesis</keyword>
<keyword id="KW-0067">ATP-binding</keyword>
<keyword id="KW-0963">Cytoplasm</keyword>
<keyword id="KW-0418">Kinase</keyword>
<keyword id="KW-0456">Lyase</keyword>
<keyword id="KW-0479">Metal-binding</keyword>
<keyword id="KW-0511">Multifunctional enzyme</keyword>
<keyword id="KW-0521">NADP</keyword>
<keyword id="KW-0547">Nucleotide-binding</keyword>
<keyword id="KW-0560">Oxidoreductase</keyword>
<keyword id="KW-1185">Reference proteome</keyword>
<keyword id="KW-0808">Transferase</keyword>
<keyword id="KW-0862">Zinc</keyword>